<organism>
    <name type="scientific">Arabidopsis thaliana</name>
    <name type="common">Mouse-ear cress</name>
    <dbReference type="NCBI Taxonomy" id="3702"/>
    <lineage>
        <taxon>Eukaryota</taxon>
        <taxon>Viridiplantae</taxon>
        <taxon>Streptophyta</taxon>
        <taxon>Embryophyta</taxon>
        <taxon>Tracheophyta</taxon>
        <taxon>Spermatophyta</taxon>
        <taxon>Magnoliopsida</taxon>
        <taxon>eudicotyledons</taxon>
        <taxon>Gunneridae</taxon>
        <taxon>Pentapetalae</taxon>
        <taxon>rosids</taxon>
        <taxon>malvids</taxon>
        <taxon>Brassicales</taxon>
        <taxon>Brassicaceae</taxon>
        <taxon>Camelineae</taxon>
        <taxon>Arabidopsis</taxon>
    </lineage>
</organism>
<protein>
    <recommendedName>
        <fullName>Putative F-box protein At4g11580</fullName>
    </recommendedName>
</protein>
<sequence>MTKVESTSGEVSEWADLNKDILELIFNKLDVMDITMGASRVCISWFLASHNKTLWNTVDLTNLQELDVSRIFNFKDKERPIFFYKHPVDHKHGLTNLLTKIISRFFLDFFEVEGSISLMNLLVEISKLSRMAPKNLFFNFNSYIQENGLKFAAEKMPNIEKLALPIWCYQNEKSLRFAFSQWKNLKTLIIAHEHSFSGRFDFKAVGESCSNLTNLKYLGRLEEYTSREIVSYLHSLKRLSLRCFLVSSIAVYRFITGLPNLTILNVSHCKNPYDYFLPIAKSIDNYVITAATQKLEKFITCPHDCMICKDRCRYSLSYLAEVWRNDEIKELEF</sequence>
<proteinExistence type="predicted"/>
<name>FB230_ARATH</name>
<gene>
    <name type="ordered locus">At4g11580</name>
    <name type="ORF">T5C23.10</name>
</gene>
<keyword id="KW-1185">Reference proteome</keyword>
<accession>Q9T0C6</accession>
<reference key="1">
    <citation type="journal article" date="1999" name="Nature">
        <title>Sequence and analysis of chromosome 4 of the plant Arabidopsis thaliana.</title>
        <authorList>
            <person name="Mayer K.F.X."/>
            <person name="Schueller C."/>
            <person name="Wambutt R."/>
            <person name="Murphy G."/>
            <person name="Volckaert G."/>
            <person name="Pohl T."/>
            <person name="Duesterhoeft A."/>
            <person name="Stiekema W."/>
            <person name="Entian K.-D."/>
            <person name="Terryn N."/>
            <person name="Harris B."/>
            <person name="Ansorge W."/>
            <person name="Brandt P."/>
            <person name="Grivell L.A."/>
            <person name="Rieger M."/>
            <person name="Weichselgartner M."/>
            <person name="de Simone V."/>
            <person name="Obermaier B."/>
            <person name="Mache R."/>
            <person name="Mueller M."/>
            <person name="Kreis M."/>
            <person name="Delseny M."/>
            <person name="Puigdomenech P."/>
            <person name="Watson M."/>
            <person name="Schmidtheini T."/>
            <person name="Reichert B."/>
            <person name="Portetelle D."/>
            <person name="Perez-Alonso M."/>
            <person name="Boutry M."/>
            <person name="Bancroft I."/>
            <person name="Vos P."/>
            <person name="Hoheisel J."/>
            <person name="Zimmermann W."/>
            <person name="Wedler H."/>
            <person name="Ridley P."/>
            <person name="Langham S.-A."/>
            <person name="McCullagh B."/>
            <person name="Bilham L."/>
            <person name="Robben J."/>
            <person name="van der Schueren J."/>
            <person name="Grymonprez B."/>
            <person name="Chuang Y.-J."/>
            <person name="Vandenbussche F."/>
            <person name="Braeken M."/>
            <person name="Weltjens I."/>
            <person name="Voet M."/>
            <person name="Bastiaens I."/>
            <person name="Aert R."/>
            <person name="Defoor E."/>
            <person name="Weitzenegger T."/>
            <person name="Bothe G."/>
            <person name="Ramsperger U."/>
            <person name="Hilbert H."/>
            <person name="Braun M."/>
            <person name="Holzer E."/>
            <person name="Brandt A."/>
            <person name="Peters S."/>
            <person name="van Staveren M."/>
            <person name="Dirkse W."/>
            <person name="Mooijman P."/>
            <person name="Klein Lankhorst R."/>
            <person name="Rose M."/>
            <person name="Hauf J."/>
            <person name="Koetter P."/>
            <person name="Berneiser S."/>
            <person name="Hempel S."/>
            <person name="Feldpausch M."/>
            <person name="Lamberth S."/>
            <person name="Van den Daele H."/>
            <person name="De Keyser A."/>
            <person name="Buysshaert C."/>
            <person name="Gielen J."/>
            <person name="Villarroel R."/>
            <person name="De Clercq R."/>
            <person name="van Montagu M."/>
            <person name="Rogers J."/>
            <person name="Cronin A."/>
            <person name="Quail M.A."/>
            <person name="Bray-Allen S."/>
            <person name="Clark L."/>
            <person name="Doggett J."/>
            <person name="Hall S."/>
            <person name="Kay M."/>
            <person name="Lennard N."/>
            <person name="McLay K."/>
            <person name="Mayes R."/>
            <person name="Pettett A."/>
            <person name="Rajandream M.A."/>
            <person name="Lyne M."/>
            <person name="Benes V."/>
            <person name="Rechmann S."/>
            <person name="Borkova D."/>
            <person name="Bloecker H."/>
            <person name="Scharfe M."/>
            <person name="Grimm M."/>
            <person name="Loehnert T.-H."/>
            <person name="Dose S."/>
            <person name="de Haan M."/>
            <person name="Maarse A.C."/>
            <person name="Schaefer M."/>
            <person name="Mueller-Auer S."/>
            <person name="Gabel C."/>
            <person name="Fuchs M."/>
            <person name="Fartmann B."/>
            <person name="Granderath K."/>
            <person name="Dauner D."/>
            <person name="Herzl A."/>
            <person name="Neumann S."/>
            <person name="Argiriou A."/>
            <person name="Vitale D."/>
            <person name="Liguori R."/>
            <person name="Piravandi E."/>
            <person name="Massenet O."/>
            <person name="Quigley F."/>
            <person name="Clabauld G."/>
            <person name="Muendlein A."/>
            <person name="Felber R."/>
            <person name="Schnabl S."/>
            <person name="Hiller R."/>
            <person name="Schmidt W."/>
            <person name="Lecharny A."/>
            <person name="Aubourg S."/>
            <person name="Chefdor F."/>
            <person name="Cooke R."/>
            <person name="Berger C."/>
            <person name="Monfort A."/>
            <person name="Casacuberta E."/>
            <person name="Gibbons T."/>
            <person name="Weber N."/>
            <person name="Vandenbol M."/>
            <person name="Bargues M."/>
            <person name="Terol J."/>
            <person name="Torres A."/>
            <person name="Perez-Perez A."/>
            <person name="Purnelle B."/>
            <person name="Bent E."/>
            <person name="Johnson S."/>
            <person name="Tacon D."/>
            <person name="Jesse T."/>
            <person name="Heijnen L."/>
            <person name="Schwarz S."/>
            <person name="Scholler P."/>
            <person name="Heber S."/>
            <person name="Francs P."/>
            <person name="Bielke C."/>
            <person name="Frishman D."/>
            <person name="Haase D."/>
            <person name="Lemcke K."/>
            <person name="Mewes H.-W."/>
            <person name="Stocker S."/>
            <person name="Zaccaria P."/>
            <person name="Bevan M."/>
            <person name="Wilson R.K."/>
            <person name="de la Bastide M."/>
            <person name="Habermann K."/>
            <person name="Parnell L."/>
            <person name="Dedhia N."/>
            <person name="Gnoj L."/>
            <person name="Schutz K."/>
            <person name="Huang E."/>
            <person name="Spiegel L."/>
            <person name="Sekhon M."/>
            <person name="Murray J."/>
            <person name="Sheet P."/>
            <person name="Cordes M."/>
            <person name="Abu-Threideh J."/>
            <person name="Stoneking T."/>
            <person name="Kalicki J."/>
            <person name="Graves T."/>
            <person name="Harmon G."/>
            <person name="Edwards J."/>
            <person name="Latreille P."/>
            <person name="Courtney L."/>
            <person name="Cloud J."/>
            <person name="Abbott A."/>
            <person name="Scott K."/>
            <person name="Johnson D."/>
            <person name="Minx P."/>
            <person name="Bentley D."/>
            <person name="Fulton B."/>
            <person name="Miller N."/>
            <person name="Greco T."/>
            <person name="Kemp K."/>
            <person name="Kramer J."/>
            <person name="Fulton L."/>
            <person name="Mardis E."/>
            <person name="Dante M."/>
            <person name="Pepin K."/>
            <person name="Hillier L.W."/>
            <person name="Nelson J."/>
            <person name="Spieth J."/>
            <person name="Ryan E."/>
            <person name="Andrews S."/>
            <person name="Geisel C."/>
            <person name="Layman D."/>
            <person name="Du H."/>
            <person name="Ali J."/>
            <person name="Berghoff A."/>
            <person name="Jones K."/>
            <person name="Drone K."/>
            <person name="Cotton M."/>
            <person name="Joshu C."/>
            <person name="Antonoiu B."/>
            <person name="Zidanic M."/>
            <person name="Strong C."/>
            <person name="Sun H."/>
            <person name="Lamar B."/>
            <person name="Yordan C."/>
            <person name="Ma P."/>
            <person name="Zhong J."/>
            <person name="Preston R."/>
            <person name="Vil D."/>
            <person name="Shekher M."/>
            <person name="Matero A."/>
            <person name="Shah R."/>
            <person name="Swaby I.K."/>
            <person name="O'Shaughnessy A."/>
            <person name="Rodriguez M."/>
            <person name="Hoffman J."/>
            <person name="Till S."/>
            <person name="Granat S."/>
            <person name="Shohdy N."/>
            <person name="Hasegawa A."/>
            <person name="Hameed A."/>
            <person name="Lodhi M."/>
            <person name="Johnson A."/>
            <person name="Chen E."/>
            <person name="Marra M.A."/>
            <person name="Martienssen R."/>
            <person name="McCombie W.R."/>
        </authorList>
    </citation>
    <scope>NUCLEOTIDE SEQUENCE [LARGE SCALE GENOMIC DNA]</scope>
    <source>
        <strain>cv. Columbia</strain>
    </source>
</reference>
<reference key="2">
    <citation type="journal article" date="2017" name="Plant J.">
        <title>Araport11: a complete reannotation of the Arabidopsis thaliana reference genome.</title>
        <authorList>
            <person name="Cheng C.Y."/>
            <person name="Krishnakumar V."/>
            <person name="Chan A.P."/>
            <person name="Thibaud-Nissen F."/>
            <person name="Schobel S."/>
            <person name="Town C.D."/>
        </authorList>
    </citation>
    <scope>GENOME REANNOTATION</scope>
    <source>
        <strain>cv. Columbia</strain>
    </source>
</reference>
<dbReference type="EMBL" id="AL049500">
    <property type="protein sequence ID" value="CAB39929.1"/>
    <property type="molecule type" value="Genomic_DNA"/>
</dbReference>
<dbReference type="EMBL" id="AL161532">
    <property type="protein sequence ID" value="CAB78201.1"/>
    <property type="molecule type" value="Genomic_DNA"/>
</dbReference>
<dbReference type="EMBL" id="CP002687">
    <property type="protein sequence ID" value="AEE83027.1"/>
    <property type="molecule type" value="Genomic_DNA"/>
</dbReference>
<dbReference type="PIR" id="T04205">
    <property type="entry name" value="T04205"/>
</dbReference>
<dbReference type="RefSeq" id="NP_192895.1">
    <property type="nucleotide sequence ID" value="NM_117227.1"/>
</dbReference>
<dbReference type="SMR" id="Q9T0C6"/>
<dbReference type="STRING" id="3702.Q9T0C6"/>
<dbReference type="GlyGen" id="Q9T0C6">
    <property type="glycosylation" value="3 sites, 1 O-linked glycan (3 sites)"/>
</dbReference>
<dbReference type="PaxDb" id="3702-AT4G11580.1"/>
<dbReference type="EnsemblPlants" id="AT4G11580.1">
    <property type="protein sequence ID" value="AT4G11580.1"/>
    <property type="gene ID" value="AT4G11580"/>
</dbReference>
<dbReference type="GeneID" id="826762"/>
<dbReference type="Gramene" id="AT4G11580.1">
    <property type="protein sequence ID" value="AT4G11580.1"/>
    <property type="gene ID" value="AT4G11580"/>
</dbReference>
<dbReference type="KEGG" id="ath:AT4G11580"/>
<dbReference type="Araport" id="AT4G11580"/>
<dbReference type="TAIR" id="AT4G11580"/>
<dbReference type="eggNOG" id="KOG1947">
    <property type="taxonomic scope" value="Eukaryota"/>
</dbReference>
<dbReference type="HOGENOM" id="CLU_050941_2_1_1"/>
<dbReference type="InParanoid" id="Q9T0C6"/>
<dbReference type="OMA" id="NKPWLEG"/>
<dbReference type="PhylomeDB" id="Q9T0C6"/>
<dbReference type="PRO" id="PR:Q9T0C6"/>
<dbReference type="Proteomes" id="UP000006548">
    <property type="component" value="Chromosome 4"/>
</dbReference>
<dbReference type="ExpressionAtlas" id="Q9T0C6">
    <property type="expression patterns" value="differential"/>
</dbReference>
<dbReference type="Gene3D" id="1.20.1280.50">
    <property type="match status" value="1"/>
</dbReference>
<dbReference type="Gene3D" id="3.80.10.10">
    <property type="entry name" value="Ribonuclease Inhibitor"/>
    <property type="match status" value="1"/>
</dbReference>
<dbReference type="InterPro" id="IPR036047">
    <property type="entry name" value="F-box-like_dom_sf"/>
</dbReference>
<dbReference type="InterPro" id="IPR032675">
    <property type="entry name" value="LRR_dom_sf"/>
</dbReference>
<dbReference type="PANTHER" id="PTHR38926">
    <property type="entry name" value="F-BOX DOMAIN CONTAINING PROTEIN, EXPRESSED"/>
    <property type="match status" value="1"/>
</dbReference>
<dbReference type="PANTHER" id="PTHR38926:SF58">
    <property type="entry name" value="F-BOX DOMAIN-CONTAINING PROTEIN"/>
    <property type="match status" value="1"/>
</dbReference>
<dbReference type="SUPFAM" id="SSF81383">
    <property type="entry name" value="F-box domain"/>
    <property type="match status" value="1"/>
</dbReference>
<dbReference type="SUPFAM" id="SSF52047">
    <property type="entry name" value="RNI-like"/>
    <property type="match status" value="1"/>
</dbReference>
<feature type="chain" id="PRO_0000283499" description="Putative F-box protein At4g11580">
    <location>
        <begin position="1"/>
        <end position="333"/>
    </location>
</feature>
<feature type="domain" description="F-box">
    <location>
        <begin position="11"/>
        <end position="58"/>
    </location>
</feature>